<dbReference type="EC" id="2.6.1.-"/>
<dbReference type="EMBL" id="AC011000">
    <property type="protein sequence ID" value="AAF75807.1"/>
    <property type="molecule type" value="Genomic_DNA"/>
</dbReference>
<dbReference type="EMBL" id="CP002684">
    <property type="protein sequence ID" value="AEE34027.1"/>
    <property type="molecule type" value="Genomic_DNA"/>
</dbReference>
<dbReference type="EMBL" id="AF348575">
    <property type="protein sequence ID" value="AAK15546.1"/>
    <property type="molecule type" value="mRNA"/>
</dbReference>
<dbReference type="EMBL" id="AY054691">
    <property type="protein sequence ID" value="AAK96882.1"/>
    <property type="molecule type" value="mRNA"/>
</dbReference>
<dbReference type="EMBL" id="BT008906">
    <property type="protein sequence ID" value="AAP68345.1"/>
    <property type="molecule type" value="mRNA"/>
</dbReference>
<dbReference type="PIR" id="D96654">
    <property type="entry name" value="D96654"/>
</dbReference>
<dbReference type="RefSeq" id="NP_564804.1">
    <property type="nucleotide sequence ID" value="NM_104974.4"/>
</dbReference>
<dbReference type="SMR" id="Q9LQ10"/>
<dbReference type="BioGRID" id="27819">
    <property type="interactions" value="3"/>
</dbReference>
<dbReference type="FunCoup" id="Q9LQ10">
    <property type="interactions" value="218"/>
</dbReference>
<dbReference type="IntAct" id="Q9LQ10">
    <property type="interactions" value="1"/>
</dbReference>
<dbReference type="STRING" id="3702.Q9LQ10"/>
<dbReference type="iPTMnet" id="Q9LQ10"/>
<dbReference type="PaxDb" id="3702-AT1G62960.1"/>
<dbReference type="ProteomicsDB" id="245132"/>
<dbReference type="EnsemblPlants" id="AT1G62960.1">
    <property type="protein sequence ID" value="AT1G62960.1"/>
    <property type="gene ID" value="AT1G62960"/>
</dbReference>
<dbReference type="GeneID" id="842598"/>
<dbReference type="Gramene" id="AT1G62960.1">
    <property type="protein sequence ID" value="AT1G62960.1"/>
    <property type="gene ID" value="AT1G62960"/>
</dbReference>
<dbReference type="KEGG" id="ath:AT1G62960"/>
<dbReference type="Araport" id="AT1G62960"/>
<dbReference type="TAIR" id="AT1G62960">
    <property type="gene designation" value="ACS10"/>
</dbReference>
<dbReference type="eggNOG" id="KOG0256">
    <property type="taxonomic scope" value="Eukaryota"/>
</dbReference>
<dbReference type="HOGENOM" id="CLU_017584_1_0_1"/>
<dbReference type="InParanoid" id="Q9LQ10"/>
<dbReference type="OMA" id="WIDLSKC"/>
<dbReference type="PhylomeDB" id="Q9LQ10"/>
<dbReference type="PRO" id="PR:Q9LQ10"/>
<dbReference type="Proteomes" id="UP000006548">
    <property type="component" value="Chromosome 1"/>
</dbReference>
<dbReference type="ExpressionAtlas" id="Q9LQ10">
    <property type="expression patterns" value="baseline and differential"/>
</dbReference>
<dbReference type="GO" id="GO:0030170">
    <property type="term" value="F:pyridoxal phosphate binding"/>
    <property type="evidence" value="ECO:0007669"/>
    <property type="project" value="InterPro"/>
</dbReference>
<dbReference type="GO" id="GO:0008483">
    <property type="term" value="F:transaminase activity"/>
    <property type="evidence" value="ECO:0007669"/>
    <property type="project" value="UniProtKB-KW"/>
</dbReference>
<dbReference type="GO" id="GO:0009058">
    <property type="term" value="P:biosynthetic process"/>
    <property type="evidence" value="ECO:0007669"/>
    <property type="project" value="InterPro"/>
</dbReference>
<dbReference type="CDD" id="cd00609">
    <property type="entry name" value="AAT_like"/>
    <property type="match status" value="1"/>
</dbReference>
<dbReference type="Gene3D" id="3.90.1150.10">
    <property type="entry name" value="Aspartate Aminotransferase, domain 1"/>
    <property type="match status" value="1"/>
</dbReference>
<dbReference type="Gene3D" id="3.40.640.10">
    <property type="entry name" value="Type I PLP-dependent aspartate aminotransferase-like (Major domain)"/>
    <property type="match status" value="1"/>
</dbReference>
<dbReference type="InterPro" id="IPR004839">
    <property type="entry name" value="Aminotransferase_I/II_large"/>
</dbReference>
<dbReference type="InterPro" id="IPR050478">
    <property type="entry name" value="Ethylene_sulfur-biosynth"/>
</dbReference>
<dbReference type="InterPro" id="IPR015424">
    <property type="entry name" value="PyrdxlP-dep_Trfase"/>
</dbReference>
<dbReference type="InterPro" id="IPR015421">
    <property type="entry name" value="PyrdxlP-dep_Trfase_major"/>
</dbReference>
<dbReference type="InterPro" id="IPR015422">
    <property type="entry name" value="PyrdxlP-dep_Trfase_small"/>
</dbReference>
<dbReference type="PANTHER" id="PTHR43795:SF85">
    <property type="entry name" value="AMINOTRANSFERASE ACS10-RELATED"/>
    <property type="match status" value="1"/>
</dbReference>
<dbReference type="PANTHER" id="PTHR43795">
    <property type="entry name" value="BIFUNCTIONAL ASPARTATE AMINOTRANSFERASE AND GLUTAMATE/ASPARTATE-PREPHENATE AMINOTRANSFERASE-RELATED"/>
    <property type="match status" value="1"/>
</dbReference>
<dbReference type="Pfam" id="PF00155">
    <property type="entry name" value="Aminotran_1_2"/>
    <property type="match status" value="1"/>
</dbReference>
<dbReference type="PRINTS" id="PR00753">
    <property type="entry name" value="ACCSYNTHASE"/>
</dbReference>
<dbReference type="SUPFAM" id="SSF53383">
    <property type="entry name" value="PLP-dependent transferases"/>
    <property type="match status" value="1"/>
</dbReference>
<keyword id="KW-0032">Aminotransferase</keyword>
<keyword id="KW-0663">Pyridoxal phosphate</keyword>
<keyword id="KW-1185">Reference proteome</keyword>
<keyword id="KW-0808">Transferase</keyword>
<comment type="function">
    <text>Probable aminotransferase. Does not have 1-aminocyclopropane-1-carboxylate synthase (ACS) activity, suggesting that it is not involved in ethylene biosynthesis.</text>
</comment>
<comment type="cofactor">
    <cofactor evidence="1">
        <name>pyridoxal 5'-phosphate</name>
        <dbReference type="ChEBI" id="CHEBI:597326"/>
    </cofactor>
</comment>
<comment type="subunit">
    <text evidence="1">Homodimer.</text>
</comment>
<comment type="tissue specificity">
    <text evidence="3">Expressed in roots.</text>
</comment>
<comment type="induction">
    <text evidence="3">By indole-3-acetic acid (IAA) and cycloheximide (CHX).</text>
</comment>
<comment type="similarity">
    <text evidence="4">Belongs to the class-I pyridoxal-phosphate-dependent aminotransferase family.</text>
</comment>
<comment type="caution">
    <text evidence="4">Contains a Gln instead of a Glu in position 176 and a Phe residue instead of a Tyr in position 209; these residues being essential in substrate recognition by ACS enzymes.</text>
</comment>
<sequence length="557" mass="61016">MTRTEPNRSRSSNSDSDKNSGNVGGGRTTGMRVIVPLQGVVQGRGGLFLGSVIPCAFFYFLQFYLKRNRKNDESDNSGEQNSSASSSSSPNSGLPDPTRSQSAGHLTELTGLPRSLSRILLSPRNSGGAVSVSGRVNCVLKGGDSSPYYVGQKRVEDDPYDELGNPDGVIQLGLAQNNKLSLDDWVLENPKEAISDGLSISGIASYEPSDGLLELKMAVAGFMTEATKNSVTFDPSQLVLTSGASSAIEILSFCLADSGNAFLVPTPCSPGYDRDVKWRTGVDIIHVPCRSADNFNMSMVVLDRAFYQAKKRGVRIRGIIISNPSNPMGSLLSRENLYALLDFARERNIHIISNEIFAGSVHGEEGEFVSMAEIVDTEENIDRERVHIVYDLSKDLSFRGLRSAAIYSFNESVLSASRKLTTLSPVSSPTQHLLISAISNPKNVQRFVKTNRQRLQSIYTELVEGLKELGIECTRSNGGFYCWADMRGLISSYSEKGEIELWNKLLNIGKINVIPGSCCHCIEPGWFRICFSNLSERDVPVVMNRIRKVCETCKSQN</sequence>
<organism>
    <name type="scientific">Arabidopsis thaliana</name>
    <name type="common">Mouse-ear cress</name>
    <dbReference type="NCBI Taxonomy" id="3702"/>
    <lineage>
        <taxon>Eukaryota</taxon>
        <taxon>Viridiplantae</taxon>
        <taxon>Streptophyta</taxon>
        <taxon>Embryophyta</taxon>
        <taxon>Tracheophyta</taxon>
        <taxon>Spermatophyta</taxon>
        <taxon>Magnoliopsida</taxon>
        <taxon>eudicotyledons</taxon>
        <taxon>Gunneridae</taxon>
        <taxon>Pentapetalae</taxon>
        <taxon>rosids</taxon>
        <taxon>malvids</taxon>
        <taxon>Brassicales</taxon>
        <taxon>Brassicaceae</taxon>
        <taxon>Camelineae</taxon>
        <taxon>Arabidopsis</taxon>
    </lineage>
</organism>
<name>1A110_ARATH</name>
<evidence type="ECO:0000250" key="1"/>
<evidence type="ECO:0000256" key="2">
    <source>
        <dbReference type="SAM" id="MobiDB-lite"/>
    </source>
</evidence>
<evidence type="ECO:0000269" key="3">
    <source>
    </source>
</evidence>
<evidence type="ECO:0000305" key="4"/>
<proteinExistence type="evidence at protein level"/>
<feature type="chain" id="PRO_0000123904" description="Probable aminotransferase ACS10">
    <location>
        <begin position="1"/>
        <end position="557"/>
    </location>
</feature>
<feature type="region of interest" description="Disordered" evidence="2">
    <location>
        <begin position="1"/>
        <end position="29"/>
    </location>
</feature>
<feature type="region of interest" description="Disordered" evidence="2">
    <location>
        <begin position="70"/>
        <end position="104"/>
    </location>
</feature>
<feature type="compositionally biased region" description="Low complexity" evidence="2">
    <location>
        <begin position="77"/>
        <end position="92"/>
    </location>
</feature>
<feature type="modified residue" description="N6-(pyridoxal phosphate)lysine" evidence="1">
    <location>
        <position position="394"/>
    </location>
</feature>
<accession>Q9LQ10</accession>
<gene>
    <name type="primary">ACS10</name>
    <name type="ordered locus">At1g62960</name>
    <name type="ORF">F16P17.11</name>
</gene>
<protein>
    <recommendedName>
        <fullName>Probable aminotransferase ACS10</fullName>
        <ecNumber>2.6.1.-</ecNumber>
    </recommendedName>
</protein>
<reference key="1">
    <citation type="journal article" date="2000" name="Nature">
        <title>Sequence and analysis of chromosome 1 of the plant Arabidopsis thaliana.</title>
        <authorList>
            <person name="Theologis A."/>
            <person name="Ecker J.R."/>
            <person name="Palm C.J."/>
            <person name="Federspiel N.A."/>
            <person name="Kaul S."/>
            <person name="White O."/>
            <person name="Alonso J."/>
            <person name="Altafi H."/>
            <person name="Araujo R."/>
            <person name="Bowman C.L."/>
            <person name="Brooks S.Y."/>
            <person name="Buehler E."/>
            <person name="Chan A."/>
            <person name="Chao Q."/>
            <person name="Chen H."/>
            <person name="Cheuk R.F."/>
            <person name="Chin C.W."/>
            <person name="Chung M.K."/>
            <person name="Conn L."/>
            <person name="Conway A.B."/>
            <person name="Conway A.R."/>
            <person name="Creasy T.H."/>
            <person name="Dewar K."/>
            <person name="Dunn P."/>
            <person name="Etgu P."/>
            <person name="Feldblyum T.V."/>
            <person name="Feng J.-D."/>
            <person name="Fong B."/>
            <person name="Fujii C.Y."/>
            <person name="Gill J.E."/>
            <person name="Goldsmith A.D."/>
            <person name="Haas B."/>
            <person name="Hansen N.F."/>
            <person name="Hughes B."/>
            <person name="Huizar L."/>
            <person name="Hunter J.L."/>
            <person name="Jenkins J."/>
            <person name="Johnson-Hopson C."/>
            <person name="Khan S."/>
            <person name="Khaykin E."/>
            <person name="Kim C.J."/>
            <person name="Koo H.L."/>
            <person name="Kremenetskaia I."/>
            <person name="Kurtz D.B."/>
            <person name="Kwan A."/>
            <person name="Lam B."/>
            <person name="Langin-Hooper S."/>
            <person name="Lee A."/>
            <person name="Lee J.M."/>
            <person name="Lenz C.A."/>
            <person name="Li J.H."/>
            <person name="Li Y.-P."/>
            <person name="Lin X."/>
            <person name="Liu S.X."/>
            <person name="Liu Z.A."/>
            <person name="Luros J.S."/>
            <person name="Maiti R."/>
            <person name="Marziali A."/>
            <person name="Militscher J."/>
            <person name="Miranda M."/>
            <person name="Nguyen M."/>
            <person name="Nierman W.C."/>
            <person name="Osborne B.I."/>
            <person name="Pai G."/>
            <person name="Peterson J."/>
            <person name="Pham P.K."/>
            <person name="Rizzo M."/>
            <person name="Rooney T."/>
            <person name="Rowley D."/>
            <person name="Sakano H."/>
            <person name="Salzberg S.L."/>
            <person name="Schwartz J.R."/>
            <person name="Shinn P."/>
            <person name="Southwick A.M."/>
            <person name="Sun H."/>
            <person name="Tallon L.J."/>
            <person name="Tambunga G."/>
            <person name="Toriumi M.J."/>
            <person name="Town C.D."/>
            <person name="Utterback T."/>
            <person name="Van Aken S."/>
            <person name="Vaysberg M."/>
            <person name="Vysotskaia V.S."/>
            <person name="Walker M."/>
            <person name="Wu D."/>
            <person name="Yu G."/>
            <person name="Fraser C.M."/>
            <person name="Venter J.C."/>
            <person name="Davis R.W."/>
        </authorList>
    </citation>
    <scope>NUCLEOTIDE SEQUENCE [LARGE SCALE GENOMIC DNA]</scope>
    <source>
        <strain>cv. Columbia</strain>
    </source>
</reference>
<reference key="2">
    <citation type="journal article" date="2017" name="Plant J.">
        <title>Araport11: a complete reannotation of the Arabidopsis thaliana reference genome.</title>
        <authorList>
            <person name="Cheng C.Y."/>
            <person name="Krishnakumar V."/>
            <person name="Chan A.P."/>
            <person name="Thibaud-Nissen F."/>
            <person name="Schobel S."/>
            <person name="Town C.D."/>
        </authorList>
    </citation>
    <scope>GENOME REANNOTATION</scope>
    <source>
        <strain>cv. Columbia</strain>
    </source>
</reference>
<reference key="3">
    <citation type="journal article" date="2003" name="Science">
        <title>Empirical analysis of transcriptional activity in the Arabidopsis genome.</title>
        <authorList>
            <person name="Yamada K."/>
            <person name="Lim J."/>
            <person name="Dale J.M."/>
            <person name="Chen H."/>
            <person name="Shinn P."/>
            <person name="Palm C.J."/>
            <person name="Southwick A.M."/>
            <person name="Wu H.C."/>
            <person name="Kim C.J."/>
            <person name="Nguyen M."/>
            <person name="Pham P.K."/>
            <person name="Cheuk R.F."/>
            <person name="Karlin-Newmann G."/>
            <person name="Liu S.X."/>
            <person name="Lam B."/>
            <person name="Sakano H."/>
            <person name="Wu T."/>
            <person name="Yu G."/>
            <person name="Miranda M."/>
            <person name="Quach H.L."/>
            <person name="Tripp M."/>
            <person name="Chang C.H."/>
            <person name="Lee J.M."/>
            <person name="Toriumi M.J."/>
            <person name="Chan M.M."/>
            <person name="Tang C.C."/>
            <person name="Onodera C.S."/>
            <person name="Deng J.M."/>
            <person name="Akiyama K."/>
            <person name="Ansari Y."/>
            <person name="Arakawa T."/>
            <person name="Banh J."/>
            <person name="Banno F."/>
            <person name="Bowser L."/>
            <person name="Brooks S.Y."/>
            <person name="Carninci P."/>
            <person name="Chao Q."/>
            <person name="Choy N."/>
            <person name="Enju A."/>
            <person name="Goldsmith A.D."/>
            <person name="Gurjal M."/>
            <person name="Hansen N.F."/>
            <person name="Hayashizaki Y."/>
            <person name="Johnson-Hopson C."/>
            <person name="Hsuan V.W."/>
            <person name="Iida K."/>
            <person name="Karnes M."/>
            <person name="Khan S."/>
            <person name="Koesema E."/>
            <person name="Ishida J."/>
            <person name="Jiang P.X."/>
            <person name="Jones T."/>
            <person name="Kawai J."/>
            <person name="Kamiya A."/>
            <person name="Meyers C."/>
            <person name="Nakajima M."/>
            <person name="Narusaka M."/>
            <person name="Seki M."/>
            <person name="Sakurai T."/>
            <person name="Satou M."/>
            <person name="Tamse R."/>
            <person name="Vaysberg M."/>
            <person name="Wallender E.K."/>
            <person name="Wong C."/>
            <person name="Yamamura Y."/>
            <person name="Yuan S."/>
            <person name="Shinozaki K."/>
            <person name="Davis R.W."/>
            <person name="Theologis A."/>
            <person name="Ecker J.R."/>
        </authorList>
    </citation>
    <scope>NUCLEOTIDE SEQUENCE [LARGE SCALE MRNA]</scope>
    <source>
        <strain>cv. Columbia</strain>
    </source>
</reference>
<reference key="4">
    <citation type="journal article" date="2003" name="J. Biol. Chem.">
        <title>Biochemical diversity among the 1-amino-cyclopropane-1-carboxylate synthase isozymes encoded by the Arabidopsis gene family.</title>
        <authorList>
            <person name="Yamagami T."/>
            <person name="Tsuchisaka A."/>
            <person name="Yamada K."/>
            <person name="Haddon W.F."/>
            <person name="Harden L.A."/>
            <person name="Theologis A."/>
        </authorList>
    </citation>
    <scope>LACK OF ACS ACTIVITY</scope>
    <scope>TISSUE SPECIFICITY</scope>
    <scope>INDUCTION</scope>
</reference>
<reference key="5">
    <citation type="journal article" date="2009" name="Plant Physiol.">
        <title>Large-scale Arabidopsis phosphoproteome profiling reveals novel chloroplast kinase substrates and phosphorylation networks.</title>
        <authorList>
            <person name="Reiland S."/>
            <person name="Messerli G."/>
            <person name="Baerenfaller K."/>
            <person name="Gerrits B."/>
            <person name="Endler A."/>
            <person name="Grossmann J."/>
            <person name="Gruissem W."/>
            <person name="Baginsky S."/>
        </authorList>
    </citation>
    <scope>IDENTIFICATION BY MASS SPECTROMETRY [LARGE SCALE ANALYSIS]</scope>
</reference>